<dbReference type="EMBL" id="BC074298">
    <property type="protein sequence ID" value="AAH74298.1"/>
    <property type="molecule type" value="mRNA"/>
</dbReference>
<dbReference type="RefSeq" id="NP_001086183.1">
    <property type="nucleotide sequence ID" value="NM_001092714.1"/>
</dbReference>
<dbReference type="SMR" id="Q6GLZ5"/>
<dbReference type="BioGRID" id="102775">
    <property type="interactions" value="1"/>
</dbReference>
<dbReference type="IntAct" id="Q6GLZ5">
    <property type="interactions" value="2"/>
</dbReference>
<dbReference type="DNASU" id="444612"/>
<dbReference type="GeneID" id="444612"/>
<dbReference type="KEGG" id="xla:444612"/>
<dbReference type="AGR" id="Xenbase:XB-GENE-957468"/>
<dbReference type="CTD" id="444612"/>
<dbReference type="Xenbase" id="XB-GENE-957468">
    <property type="gene designation" value="septin7.L"/>
</dbReference>
<dbReference type="OrthoDB" id="416553at2759"/>
<dbReference type="Proteomes" id="UP000186698">
    <property type="component" value="Chromosome 6L"/>
</dbReference>
<dbReference type="Bgee" id="444612">
    <property type="expression patterns" value="Expressed in spleen and 19 other cell types or tissues"/>
</dbReference>
<dbReference type="GO" id="GO:0005930">
    <property type="term" value="C:axoneme"/>
    <property type="evidence" value="ECO:0000314"/>
    <property type="project" value="UniProtKB"/>
</dbReference>
<dbReference type="GO" id="GO:0032153">
    <property type="term" value="C:cell division site"/>
    <property type="evidence" value="ECO:0000318"/>
    <property type="project" value="GO_Central"/>
</dbReference>
<dbReference type="GO" id="GO:0032154">
    <property type="term" value="C:cleavage furrow"/>
    <property type="evidence" value="ECO:0007669"/>
    <property type="project" value="UniProtKB-SubCell"/>
</dbReference>
<dbReference type="GO" id="GO:0000776">
    <property type="term" value="C:kinetochore"/>
    <property type="evidence" value="ECO:0007669"/>
    <property type="project" value="UniProtKB-KW"/>
</dbReference>
<dbReference type="GO" id="GO:0015630">
    <property type="term" value="C:microtubule cytoskeleton"/>
    <property type="evidence" value="ECO:0000318"/>
    <property type="project" value="GO_Central"/>
</dbReference>
<dbReference type="GO" id="GO:0030496">
    <property type="term" value="C:midbody"/>
    <property type="evidence" value="ECO:0007669"/>
    <property type="project" value="UniProtKB-SubCell"/>
</dbReference>
<dbReference type="GO" id="GO:0031105">
    <property type="term" value="C:septin complex"/>
    <property type="evidence" value="ECO:0000318"/>
    <property type="project" value="GO_Central"/>
</dbReference>
<dbReference type="GO" id="GO:0005940">
    <property type="term" value="C:septin ring"/>
    <property type="evidence" value="ECO:0000318"/>
    <property type="project" value="GO_Central"/>
</dbReference>
<dbReference type="GO" id="GO:0005819">
    <property type="term" value="C:spindle"/>
    <property type="evidence" value="ECO:0007669"/>
    <property type="project" value="UniProtKB-SubCell"/>
</dbReference>
<dbReference type="GO" id="GO:0005525">
    <property type="term" value="F:GTP binding"/>
    <property type="evidence" value="ECO:0007669"/>
    <property type="project" value="UniProtKB-KW"/>
</dbReference>
<dbReference type="GO" id="GO:0003924">
    <property type="term" value="F:GTPase activity"/>
    <property type="evidence" value="ECO:0000318"/>
    <property type="project" value="GO_Central"/>
</dbReference>
<dbReference type="GO" id="GO:0060090">
    <property type="term" value="F:molecular adaptor activity"/>
    <property type="evidence" value="ECO:0000318"/>
    <property type="project" value="GO_Central"/>
</dbReference>
<dbReference type="GO" id="GO:0060271">
    <property type="term" value="P:cilium assembly"/>
    <property type="evidence" value="ECO:0000315"/>
    <property type="project" value="UniProtKB"/>
</dbReference>
<dbReference type="GO" id="GO:0061640">
    <property type="term" value="P:cytoskeleton-dependent cytokinesis"/>
    <property type="evidence" value="ECO:0000318"/>
    <property type="project" value="GO_Central"/>
</dbReference>
<dbReference type="GO" id="GO:0060031">
    <property type="term" value="P:mediolateral intercalation"/>
    <property type="evidence" value="ECO:0000315"/>
    <property type="project" value="UniProtKB"/>
</dbReference>
<dbReference type="GO" id="GO:0008104">
    <property type="term" value="P:protein localization"/>
    <property type="evidence" value="ECO:0000318"/>
    <property type="project" value="GO_Central"/>
</dbReference>
<dbReference type="GO" id="GO:0016476">
    <property type="term" value="P:regulation of embryonic cell shape"/>
    <property type="evidence" value="ECO:0000315"/>
    <property type="project" value="UniProtKB"/>
</dbReference>
<dbReference type="CDD" id="cd01850">
    <property type="entry name" value="CDC_Septin"/>
    <property type="match status" value="1"/>
</dbReference>
<dbReference type="FunFam" id="3.40.50.300:FF:000162">
    <property type="entry name" value="septin-7 isoform X1"/>
    <property type="match status" value="1"/>
</dbReference>
<dbReference type="Gene3D" id="3.40.50.300">
    <property type="entry name" value="P-loop containing nucleotide triphosphate hydrolases"/>
    <property type="match status" value="1"/>
</dbReference>
<dbReference type="InterPro" id="IPR030379">
    <property type="entry name" value="G_SEPTIN_dom"/>
</dbReference>
<dbReference type="InterPro" id="IPR027417">
    <property type="entry name" value="P-loop_NTPase"/>
</dbReference>
<dbReference type="InterPro" id="IPR016491">
    <property type="entry name" value="Septin"/>
</dbReference>
<dbReference type="InterPro" id="IPR008115">
    <property type="entry name" value="Septin7"/>
</dbReference>
<dbReference type="PANTHER" id="PTHR18884">
    <property type="entry name" value="SEPTIN"/>
    <property type="match status" value="1"/>
</dbReference>
<dbReference type="Pfam" id="PF00735">
    <property type="entry name" value="Septin"/>
    <property type="match status" value="1"/>
</dbReference>
<dbReference type="PIRSF" id="PIRSF006698">
    <property type="entry name" value="Septin"/>
    <property type="match status" value="1"/>
</dbReference>
<dbReference type="PRINTS" id="PR01742">
    <property type="entry name" value="SEPTIN7"/>
</dbReference>
<dbReference type="SUPFAM" id="SSF52540">
    <property type="entry name" value="P-loop containing nucleoside triphosphate hydrolases"/>
    <property type="match status" value="1"/>
</dbReference>
<dbReference type="PROSITE" id="PS51719">
    <property type="entry name" value="G_SEPTIN"/>
    <property type="match status" value="1"/>
</dbReference>
<proteinExistence type="evidence at transcript level"/>
<name>SEPT7_XENLA</name>
<comment type="function">
    <text evidence="1 5">Filament-forming cytoskeletal GTPase. Required for normal organization of the actin cytoskeleton. Required for normal progress through mitosis. Involved in cytokinesis (By similarity). Plays a role in ciliogenesis and collective cell movements including convergent extension during gastrulation. Controls cell elongation but not polarization during convergent extension.</text>
</comment>
<comment type="subunit">
    <text evidence="1">Monomer, and homodimer. Nucleotide binding promotes oligomerization. Can form heterooligomers with other family members and form filaments (By similarity).</text>
</comment>
<comment type="subcellular location">
    <subcellularLocation>
        <location evidence="1">Cytoplasm</location>
    </subcellularLocation>
    <subcellularLocation>
        <location evidence="1">Chromosome</location>
        <location evidence="1">Centromere</location>
        <location evidence="1">Kinetochore</location>
    </subcellularLocation>
    <subcellularLocation>
        <location evidence="1">Cytoplasm</location>
        <location evidence="1">Cytoskeleton</location>
        <location evidence="1">Spindle</location>
    </subcellularLocation>
    <subcellularLocation>
        <location evidence="1">Cleavage furrow</location>
    </subcellularLocation>
    <subcellularLocation>
        <location evidence="1">Midbody</location>
    </subcellularLocation>
    <subcellularLocation>
        <location evidence="5">Cytoplasm</location>
        <location evidence="5">Cytoskeleton</location>
        <location evidence="5">Cilium axoneme</location>
    </subcellularLocation>
</comment>
<comment type="developmental stage">
    <text evidence="5">Expressed in the mesoderm during gastrulation. Expressed in the notochord of neurula stage embryos.</text>
</comment>
<comment type="miscellaneous">
    <text evidence="1">Coordinated expression with septin2 and septin6.</text>
</comment>
<comment type="similarity">
    <text evidence="4">Belongs to the TRAFAC class TrmE-Era-EngA-EngB-Septin-like GTPase superfamily. Septin GTPase family.</text>
</comment>
<evidence type="ECO:0000250" key="1"/>
<evidence type="ECO:0000250" key="2">
    <source>
        <dbReference type="UniProtKB" id="Q16181"/>
    </source>
</evidence>
<evidence type="ECO:0000255" key="3"/>
<evidence type="ECO:0000255" key="4">
    <source>
        <dbReference type="PROSITE-ProRule" id="PRU01056"/>
    </source>
</evidence>
<evidence type="ECO:0000269" key="5">
    <source>
    </source>
</evidence>
<reference key="1">
    <citation type="submission" date="2004-06" db="EMBL/GenBank/DDBJ databases">
        <authorList>
            <consortium name="NIH - Xenopus Gene Collection (XGC) project"/>
        </authorList>
    </citation>
    <scope>NUCLEOTIDE SEQUENCE [LARGE SCALE MRNA]</scope>
    <source>
        <tissue>Brain</tissue>
    </source>
</reference>
<reference key="2">
    <citation type="journal article" date="2010" name="Science">
        <title>Planar cell polarity acts through septins to control collective cell movement and ciliogenesis.</title>
        <authorList>
            <person name="Kim S.K."/>
            <person name="Shindo A."/>
            <person name="Park T.J."/>
            <person name="Oh E.C."/>
            <person name="Ghosh S."/>
            <person name="Gray R.S."/>
            <person name="Lewis R.A."/>
            <person name="Johnson C.A."/>
            <person name="Attie-Bittach T."/>
            <person name="Katsanis N."/>
            <person name="Wallingford J.B."/>
        </authorList>
    </citation>
    <scope>FUNCTION</scope>
    <scope>DEVELOPMENTAL STAGE</scope>
    <scope>SUBCELLULAR LOCATION</scope>
</reference>
<sequence length="425" mass="49469">MVAQQKNLEGYVGFANLPNQVYRKSVKRGFEFTLMVVGESGLGKSTLINSLFLTDLYAPDYPGPSHRIKKTVQVEQSKVLIKEGGVQLLLTIVDTPGFGDAVDNSNCWQPVIDYIDSKFEDYLNAESRVNRRQMPDNRVQCCLYFIAPSGHGLKPLDIEFMKRLHEKVNIIPLIAKADTLTPEECQQFKKQIMKEIQEHKIKIYEFPETDDEEENKLVKKIKDGLPLAVVGSNTIIEVNGKRVRGRQYPWGVAEVENGEHCDFTILRNMLIRTHMQDLKDVTNNVHYENYRSRKLAAVTYNGVDNNKNKGQLTKYDTGEGMSPLAQMEEERREHVAKMKKMEMEMEQVFEMKVKEKVQKLKDSEAELQRRHEQMKKNLEAQHKELEEKRRQFEEEKVNWETQQRILEQQNTSRTLEKNKKKGKIF</sequence>
<protein>
    <recommendedName>
        <fullName>Septin-7</fullName>
    </recommendedName>
</protein>
<organism>
    <name type="scientific">Xenopus laevis</name>
    <name type="common">African clawed frog</name>
    <dbReference type="NCBI Taxonomy" id="8355"/>
    <lineage>
        <taxon>Eukaryota</taxon>
        <taxon>Metazoa</taxon>
        <taxon>Chordata</taxon>
        <taxon>Craniata</taxon>
        <taxon>Vertebrata</taxon>
        <taxon>Euteleostomi</taxon>
        <taxon>Amphibia</taxon>
        <taxon>Batrachia</taxon>
        <taxon>Anura</taxon>
        <taxon>Pipoidea</taxon>
        <taxon>Pipidae</taxon>
        <taxon>Xenopodinae</taxon>
        <taxon>Xenopus</taxon>
        <taxon>Xenopus</taxon>
    </lineage>
</organism>
<keyword id="KW-0131">Cell cycle</keyword>
<keyword id="KW-0132">Cell division</keyword>
<keyword id="KW-0966">Cell projection</keyword>
<keyword id="KW-0137">Centromere</keyword>
<keyword id="KW-0158">Chromosome</keyword>
<keyword id="KW-0969">Cilium</keyword>
<keyword id="KW-0175">Coiled coil</keyword>
<keyword id="KW-0963">Cytoplasm</keyword>
<keyword id="KW-0206">Cytoskeleton</keyword>
<keyword id="KW-0342">GTP-binding</keyword>
<keyword id="KW-0995">Kinetochore</keyword>
<keyword id="KW-0498">Mitosis</keyword>
<keyword id="KW-0547">Nucleotide-binding</keyword>
<keyword id="KW-1185">Reference proteome</keyword>
<gene>
    <name evidence="2" type="primary">septin7</name>
    <name type="synonym">sept7</name>
</gene>
<feature type="chain" id="PRO_0000406216" description="Septin-7">
    <location>
        <begin position="1"/>
        <end position="425"/>
    </location>
</feature>
<feature type="domain" description="Septin-type G" evidence="4">
    <location>
        <begin position="28"/>
        <end position="297"/>
    </location>
</feature>
<feature type="region of interest" description="G1 motif" evidence="4">
    <location>
        <begin position="38"/>
        <end position="45"/>
    </location>
</feature>
<feature type="region of interest" description="G3 motif" evidence="4">
    <location>
        <begin position="94"/>
        <end position="97"/>
    </location>
</feature>
<feature type="region of interest" description="G4 motif" evidence="4">
    <location>
        <begin position="175"/>
        <end position="178"/>
    </location>
</feature>
<feature type="coiled-coil region" evidence="3">
    <location>
        <begin position="324"/>
        <end position="421"/>
    </location>
</feature>
<feature type="binding site" evidence="1">
    <location>
        <begin position="38"/>
        <end position="45"/>
    </location>
    <ligand>
        <name>GTP</name>
        <dbReference type="ChEBI" id="CHEBI:37565"/>
    </ligand>
</feature>
<feature type="binding site" evidence="1">
    <location>
        <position position="71"/>
    </location>
    <ligand>
        <name>GTP</name>
        <dbReference type="ChEBI" id="CHEBI:37565"/>
    </ligand>
</feature>
<feature type="binding site" evidence="1">
    <location>
        <position position="97"/>
    </location>
    <ligand>
        <name>GTP</name>
        <dbReference type="ChEBI" id="CHEBI:37565"/>
    </ligand>
</feature>
<feature type="binding site" evidence="1">
    <location>
        <begin position="176"/>
        <end position="184"/>
    </location>
    <ligand>
        <name>GTP</name>
        <dbReference type="ChEBI" id="CHEBI:37565"/>
    </ligand>
</feature>
<feature type="binding site" evidence="1">
    <location>
        <position position="231"/>
    </location>
    <ligand>
        <name>GTP</name>
        <dbReference type="ChEBI" id="CHEBI:37565"/>
    </ligand>
</feature>
<feature type="binding site" evidence="1">
    <location>
        <position position="246"/>
    </location>
    <ligand>
        <name>GTP</name>
        <dbReference type="ChEBI" id="CHEBI:37565"/>
    </ligand>
</feature>
<accession>Q6GLZ5</accession>